<organism>
    <name type="scientific">Caulobacter vibrioides (strain ATCC 19089 / CIP 103742 / CB 15)</name>
    <name type="common">Caulobacter crescentus</name>
    <dbReference type="NCBI Taxonomy" id="190650"/>
    <lineage>
        <taxon>Bacteria</taxon>
        <taxon>Pseudomonadati</taxon>
        <taxon>Pseudomonadota</taxon>
        <taxon>Alphaproteobacteria</taxon>
        <taxon>Caulobacterales</taxon>
        <taxon>Caulobacteraceae</taxon>
        <taxon>Caulobacter</taxon>
    </lineage>
</organism>
<comment type="function">
    <text evidence="1">Catalyzes the phosphorylation of pantothenate (Pan), the first step in CoA biosynthesis.</text>
</comment>
<comment type="catalytic activity">
    <reaction evidence="1">
        <text>(R)-pantothenate + ATP = (R)-4'-phosphopantothenate + ADP + H(+)</text>
        <dbReference type="Rhea" id="RHEA:16373"/>
        <dbReference type="ChEBI" id="CHEBI:10986"/>
        <dbReference type="ChEBI" id="CHEBI:15378"/>
        <dbReference type="ChEBI" id="CHEBI:29032"/>
        <dbReference type="ChEBI" id="CHEBI:30616"/>
        <dbReference type="ChEBI" id="CHEBI:456216"/>
        <dbReference type="EC" id="2.7.1.33"/>
    </reaction>
</comment>
<comment type="cofactor">
    <cofactor evidence="1">
        <name>NH4(+)</name>
        <dbReference type="ChEBI" id="CHEBI:28938"/>
    </cofactor>
    <cofactor evidence="1">
        <name>K(+)</name>
        <dbReference type="ChEBI" id="CHEBI:29103"/>
    </cofactor>
    <text evidence="1">A monovalent cation. Ammonium or potassium.</text>
</comment>
<comment type="pathway">
    <text evidence="1">Cofactor biosynthesis; coenzyme A biosynthesis; CoA from (R)-pantothenate: step 1/5.</text>
</comment>
<comment type="subunit">
    <text evidence="1">Homodimer.</text>
</comment>
<comment type="subcellular location">
    <subcellularLocation>
        <location evidence="1">Cytoplasm</location>
    </subcellularLocation>
</comment>
<comment type="similarity">
    <text evidence="1">Belongs to the type III pantothenate kinase family.</text>
</comment>
<name>COAX_CAUVC</name>
<protein>
    <recommendedName>
        <fullName evidence="1">Type III pantothenate kinase</fullName>
        <ecNumber evidence="1">2.7.1.33</ecNumber>
    </recommendedName>
    <alternativeName>
        <fullName evidence="1">PanK-III</fullName>
    </alternativeName>
    <alternativeName>
        <fullName evidence="1">Pantothenic acid kinase</fullName>
    </alternativeName>
</protein>
<accession>Q9A6Z1</accession>
<gene>
    <name evidence="1" type="primary">coaX</name>
    <name type="ordered locus">CC_1935</name>
</gene>
<reference key="1">
    <citation type="journal article" date="2001" name="Proc. Natl. Acad. Sci. U.S.A.">
        <title>Complete genome sequence of Caulobacter crescentus.</title>
        <authorList>
            <person name="Nierman W.C."/>
            <person name="Feldblyum T.V."/>
            <person name="Laub M.T."/>
            <person name="Paulsen I.T."/>
            <person name="Nelson K.E."/>
            <person name="Eisen J.A."/>
            <person name="Heidelberg J.F."/>
            <person name="Alley M.R.K."/>
            <person name="Ohta N."/>
            <person name="Maddock J.R."/>
            <person name="Potocka I."/>
            <person name="Nelson W.C."/>
            <person name="Newton A."/>
            <person name="Stephens C."/>
            <person name="Phadke N.D."/>
            <person name="Ely B."/>
            <person name="DeBoy R.T."/>
            <person name="Dodson R.J."/>
            <person name="Durkin A.S."/>
            <person name="Gwinn M.L."/>
            <person name="Haft D.H."/>
            <person name="Kolonay J.F."/>
            <person name="Smit J."/>
            <person name="Craven M.B."/>
            <person name="Khouri H.M."/>
            <person name="Shetty J."/>
            <person name="Berry K.J."/>
            <person name="Utterback T.R."/>
            <person name="Tran K."/>
            <person name="Wolf A.M."/>
            <person name="Vamathevan J.J."/>
            <person name="Ermolaeva M.D."/>
            <person name="White O."/>
            <person name="Salzberg S.L."/>
            <person name="Venter J.C."/>
            <person name="Shapiro L."/>
            <person name="Fraser C.M."/>
        </authorList>
    </citation>
    <scope>NUCLEOTIDE SEQUENCE [LARGE SCALE GENOMIC DNA]</scope>
    <source>
        <strain>ATCC 19089 / CIP 103742 / CB 15</strain>
    </source>
</reference>
<dbReference type="EC" id="2.7.1.33" evidence="1"/>
<dbReference type="EMBL" id="AE005673">
    <property type="protein sequence ID" value="AAK23910.1"/>
    <property type="molecule type" value="Genomic_DNA"/>
</dbReference>
<dbReference type="PIR" id="B87489">
    <property type="entry name" value="B87489"/>
</dbReference>
<dbReference type="RefSeq" id="NP_420742.1">
    <property type="nucleotide sequence ID" value="NC_002696.2"/>
</dbReference>
<dbReference type="RefSeq" id="WP_010919801.1">
    <property type="nucleotide sequence ID" value="NC_002696.2"/>
</dbReference>
<dbReference type="SMR" id="Q9A6Z1"/>
<dbReference type="STRING" id="190650.CC_1935"/>
<dbReference type="EnsemblBacteria" id="AAK23910">
    <property type="protein sequence ID" value="AAK23910"/>
    <property type="gene ID" value="CC_1935"/>
</dbReference>
<dbReference type="KEGG" id="ccr:CC_1935"/>
<dbReference type="PATRIC" id="fig|190650.5.peg.1952"/>
<dbReference type="eggNOG" id="COG1521">
    <property type="taxonomic scope" value="Bacteria"/>
</dbReference>
<dbReference type="HOGENOM" id="CLU_066627_1_0_5"/>
<dbReference type="BioCyc" id="CAULO:CC1935-MONOMER"/>
<dbReference type="UniPathway" id="UPA00241">
    <property type="reaction ID" value="UER00352"/>
</dbReference>
<dbReference type="Proteomes" id="UP000001816">
    <property type="component" value="Chromosome"/>
</dbReference>
<dbReference type="GO" id="GO:0005737">
    <property type="term" value="C:cytoplasm"/>
    <property type="evidence" value="ECO:0007669"/>
    <property type="project" value="UniProtKB-SubCell"/>
</dbReference>
<dbReference type="GO" id="GO:0005524">
    <property type="term" value="F:ATP binding"/>
    <property type="evidence" value="ECO:0007669"/>
    <property type="project" value="UniProtKB-UniRule"/>
</dbReference>
<dbReference type="GO" id="GO:0046872">
    <property type="term" value="F:metal ion binding"/>
    <property type="evidence" value="ECO:0007669"/>
    <property type="project" value="UniProtKB-KW"/>
</dbReference>
<dbReference type="GO" id="GO:0004594">
    <property type="term" value="F:pantothenate kinase activity"/>
    <property type="evidence" value="ECO:0007669"/>
    <property type="project" value="UniProtKB-UniRule"/>
</dbReference>
<dbReference type="GO" id="GO:0015937">
    <property type="term" value="P:coenzyme A biosynthetic process"/>
    <property type="evidence" value="ECO:0007669"/>
    <property type="project" value="UniProtKB-UniRule"/>
</dbReference>
<dbReference type="CDD" id="cd24015">
    <property type="entry name" value="ASKHA_NBD_PanK-III"/>
    <property type="match status" value="1"/>
</dbReference>
<dbReference type="Gene3D" id="3.30.420.40">
    <property type="match status" value="2"/>
</dbReference>
<dbReference type="HAMAP" id="MF_01274">
    <property type="entry name" value="Pantothen_kinase_3"/>
    <property type="match status" value="1"/>
</dbReference>
<dbReference type="InterPro" id="IPR043129">
    <property type="entry name" value="ATPase_NBD"/>
</dbReference>
<dbReference type="InterPro" id="IPR004619">
    <property type="entry name" value="Type_III_PanK"/>
</dbReference>
<dbReference type="NCBIfam" id="TIGR00671">
    <property type="entry name" value="baf"/>
    <property type="match status" value="1"/>
</dbReference>
<dbReference type="NCBIfam" id="NF009844">
    <property type="entry name" value="PRK13318.1-2"/>
    <property type="match status" value="1"/>
</dbReference>
<dbReference type="NCBIfam" id="NF009848">
    <property type="entry name" value="PRK13318.1-6"/>
    <property type="match status" value="1"/>
</dbReference>
<dbReference type="NCBIfam" id="NF009855">
    <property type="entry name" value="PRK13321.1"/>
    <property type="match status" value="1"/>
</dbReference>
<dbReference type="PANTHER" id="PTHR34265">
    <property type="entry name" value="TYPE III PANTOTHENATE KINASE"/>
    <property type="match status" value="1"/>
</dbReference>
<dbReference type="PANTHER" id="PTHR34265:SF1">
    <property type="entry name" value="TYPE III PANTOTHENATE KINASE"/>
    <property type="match status" value="1"/>
</dbReference>
<dbReference type="Pfam" id="PF03309">
    <property type="entry name" value="Pan_kinase"/>
    <property type="match status" value="1"/>
</dbReference>
<dbReference type="SUPFAM" id="SSF53067">
    <property type="entry name" value="Actin-like ATPase domain"/>
    <property type="match status" value="2"/>
</dbReference>
<sequence length="261" mass="27965">MMLLAIEQGNTNTMFAIHDGASWVAQWRSATESTRTADEYVVWLSQLLSMQGLGFRAIDAVIISSVVPQSIFNLRNLSRRYFNVEPLVIGENAKLGIDVRIEKPSEAGADRLVNAIGAAMVYPGPLVVIDSGTATTFDIVAADGAFEGGIIAPGINLSMQALHEAAAKLPRIAIQRPAGNRIVGTDTVSAMQSGVFWGYISLIEGLVARIKAERGEPMTVIATGGVASLFEGATDSIDHFDSDLTIRGLLEIYRRNTIAES</sequence>
<feature type="chain" id="PRO_0000267507" description="Type III pantothenate kinase">
    <location>
        <begin position="1"/>
        <end position="261"/>
    </location>
</feature>
<feature type="active site" description="Proton acceptor" evidence="1">
    <location>
        <position position="110"/>
    </location>
</feature>
<feature type="binding site" evidence="1">
    <location>
        <begin position="7"/>
        <end position="14"/>
    </location>
    <ligand>
        <name>ATP</name>
        <dbReference type="ChEBI" id="CHEBI:30616"/>
    </ligand>
</feature>
<feature type="binding site" evidence="1">
    <location>
        <begin position="108"/>
        <end position="111"/>
    </location>
    <ligand>
        <name>substrate</name>
    </ligand>
</feature>
<feature type="binding site" evidence="1">
    <location>
        <position position="130"/>
    </location>
    <ligand>
        <name>K(+)</name>
        <dbReference type="ChEBI" id="CHEBI:29103"/>
    </ligand>
</feature>
<feature type="binding site" evidence="1">
    <location>
        <position position="133"/>
    </location>
    <ligand>
        <name>ATP</name>
        <dbReference type="ChEBI" id="CHEBI:30616"/>
    </ligand>
</feature>
<feature type="binding site" evidence="1">
    <location>
        <position position="187"/>
    </location>
    <ligand>
        <name>substrate</name>
    </ligand>
</feature>
<evidence type="ECO:0000255" key="1">
    <source>
        <dbReference type="HAMAP-Rule" id="MF_01274"/>
    </source>
</evidence>
<keyword id="KW-0067">ATP-binding</keyword>
<keyword id="KW-0173">Coenzyme A biosynthesis</keyword>
<keyword id="KW-0963">Cytoplasm</keyword>
<keyword id="KW-0418">Kinase</keyword>
<keyword id="KW-0479">Metal-binding</keyword>
<keyword id="KW-0547">Nucleotide-binding</keyword>
<keyword id="KW-0630">Potassium</keyword>
<keyword id="KW-1185">Reference proteome</keyword>
<keyword id="KW-0808">Transferase</keyword>
<proteinExistence type="inferred from homology"/>